<comment type="function">
    <text evidence="1">F(1)F(0) ATP synthase produces ATP from ADP in the presence of a proton or sodium gradient. F-type ATPases consist of two structural domains, F(1) containing the extramembraneous catalytic core and F(0) containing the membrane proton channel, linked together by a central stalk and a peripheral stalk. During catalysis, ATP synthesis in the catalytic domain of F(1) is coupled via a rotary mechanism of the central stalk subunits to proton translocation (By similarity).</text>
</comment>
<comment type="function">
    <text evidence="1">Component of the F(0) channel, it forms part of the peripheral stalk, linking F(1) to F(0). The b'-subunit is a diverged and duplicated form of b found in plants and photosynthetic bacteria (By similarity).</text>
</comment>
<comment type="subunit">
    <text evidence="1">F-type ATPases have 2 components, F(1) - the catalytic core - and F(0) - the membrane proton channel. F(1) has five subunits: alpha(3), beta(3), gamma(1), delta(1), epsilon(1). F(0) has three main subunits: a(1), b(2) and c(10-14). The alpha and beta chains form an alternating ring which encloses part of the gamma chain. F(1) is attached to F(0) by a central stalk formed by the gamma and epsilon chains, while a peripheral stalk is formed by the delta and b chains (By similarity).</text>
</comment>
<comment type="subcellular location">
    <subcellularLocation>
        <location evidence="1">Cell inner membrane</location>
        <topology evidence="1">Single-pass membrane protein</topology>
    </subcellularLocation>
</comment>
<comment type="similarity">
    <text evidence="4">Belongs to the ATPase B chain family.</text>
</comment>
<proteinExistence type="inferred from homology"/>
<feature type="chain" id="PRO_0000369017" description="ATP synthase subunit b 2">
    <location>
        <begin position="1"/>
        <end position="185"/>
    </location>
</feature>
<feature type="transmembrane region" description="Helical" evidence="2">
    <location>
        <begin position="34"/>
        <end position="56"/>
    </location>
</feature>
<feature type="region of interest" description="Disordered" evidence="3">
    <location>
        <begin position="1"/>
        <end position="25"/>
    </location>
</feature>
<name>ATPF2_NITWN</name>
<reference key="1">
    <citation type="journal article" date="2006" name="Appl. Environ. Microbiol.">
        <title>Genome sequence of the chemolithoautotrophic nitrite-oxidizing bacterium Nitrobacter winogradskyi Nb-255.</title>
        <authorList>
            <person name="Starkenburg S.R."/>
            <person name="Chain P.S.G."/>
            <person name="Sayavedra-Soto L.A."/>
            <person name="Hauser L."/>
            <person name="Land M.L."/>
            <person name="Larimer F.W."/>
            <person name="Malfatti S.A."/>
            <person name="Klotz M.G."/>
            <person name="Bottomley P.J."/>
            <person name="Arp D.J."/>
            <person name="Hickey W.J."/>
        </authorList>
    </citation>
    <scope>NUCLEOTIDE SEQUENCE [LARGE SCALE GENOMIC DNA]</scope>
    <source>
        <strain>ATCC 25391 / DSM 10237 / CIP 104748 / NCIMB 11846 / Nb-255</strain>
    </source>
</reference>
<gene>
    <name type="primary">atpF2</name>
    <name type="synonym">atpG</name>
    <name type="ordered locus">Nwi_0236</name>
</gene>
<organism>
    <name type="scientific">Nitrobacter winogradskyi (strain ATCC 25391 / DSM 10237 / CIP 104748 / NCIMB 11846 / Nb-255)</name>
    <dbReference type="NCBI Taxonomy" id="323098"/>
    <lineage>
        <taxon>Bacteria</taxon>
        <taxon>Pseudomonadati</taxon>
        <taxon>Pseudomonadota</taxon>
        <taxon>Alphaproteobacteria</taxon>
        <taxon>Hyphomicrobiales</taxon>
        <taxon>Nitrobacteraceae</taxon>
        <taxon>Nitrobacter</taxon>
    </lineage>
</organism>
<dbReference type="EMBL" id="CP000115">
    <property type="protein sequence ID" value="ABA03504.1"/>
    <property type="molecule type" value="Genomic_DNA"/>
</dbReference>
<dbReference type="RefSeq" id="WP_011313571.1">
    <property type="nucleotide sequence ID" value="NC_007406.1"/>
</dbReference>
<dbReference type="SMR" id="Q3SW37"/>
<dbReference type="STRING" id="323098.Nwi_0236"/>
<dbReference type="KEGG" id="nwi:Nwi_0236"/>
<dbReference type="eggNOG" id="COG0711">
    <property type="taxonomic scope" value="Bacteria"/>
</dbReference>
<dbReference type="HOGENOM" id="CLU_079215_1_2_5"/>
<dbReference type="OrthoDB" id="9805716at2"/>
<dbReference type="Proteomes" id="UP000002531">
    <property type="component" value="Chromosome"/>
</dbReference>
<dbReference type="GO" id="GO:0005886">
    <property type="term" value="C:plasma membrane"/>
    <property type="evidence" value="ECO:0007669"/>
    <property type="project" value="UniProtKB-SubCell"/>
</dbReference>
<dbReference type="GO" id="GO:0045259">
    <property type="term" value="C:proton-transporting ATP synthase complex"/>
    <property type="evidence" value="ECO:0007669"/>
    <property type="project" value="UniProtKB-KW"/>
</dbReference>
<dbReference type="GO" id="GO:0046933">
    <property type="term" value="F:proton-transporting ATP synthase activity, rotational mechanism"/>
    <property type="evidence" value="ECO:0007669"/>
    <property type="project" value="UniProtKB-UniRule"/>
</dbReference>
<dbReference type="GO" id="GO:0046961">
    <property type="term" value="F:proton-transporting ATPase activity, rotational mechanism"/>
    <property type="evidence" value="ECO:0007669"/>
    <property type="project" value="TreeGrafter"/>
</dbReference>
<dbReference type="CDD" id="cd06503">
    <property type="entry name" value="ATP-synt_Fo_b"/>
    <property type="match status" value="1"/>
</dbReference>
<dbReference type="HAMAP" id="MF_01398">
    <property type="entry name" value="ATP_synth_b_bprime"/>
    <property type="match status" value="1"/>
</dbReference>
<dbReference type="InterPro" id="IPR002146">
    <property type="entry name" value="ATP_synth_b/b'su_bac/chlpt"/>
</dbReference>
<dbReference type="InterPro" id="IPR050059">
    <property type="entry name" value="ATP_synthase_B_chain"/>
</dbReference>
<dbReference type="PANTHER" id="PTHR33445:SF1">
    <property type="entry name" value="ATP SYNTHASE SUBUNIT B"/>
    <property type="match status" value="1"/>
</dbReference>
<dbReference type="PANTHER" id="PTHR33445">
    <property type="entry name" value="ATP SYNTHASE SUBUNIT B', CHLOROPLASTIC"/>
    <property type="match status" value="1"/>
</dbReference>
<dbReference type="Pfam" id="PF00430">
    <property type="entry name" value="ATP-synt_B"/>
    <property type="match status" value="1"/>
</dbReference>
<protein>
    <recommendedName>
        <fullName>ATP synthase subunit b 2</fullName>
    </recommendedName>
    <alternativeName>
        <fullName>ATP synthase F(0) sector subunit b 2</fullName>
    </alternativeName>
    <alternativeName>
        <fullName>ATPase subunit I 2</fullName>
    </alternativeName>
    <alternativeName>
        <fullName>F-type ATPase subunit b 2</fullName>
        <shortName>F-ATPase subunit b 2</shortName>
    </alternativeName>
</protein>
<keyword id="KW-0066">ATP synthesis</keyword>
<keyword id="KW-0997">Cell inner membrane</keyword>
<keyword id="KW-1003">Cell membrane</keyword>
<keyword id="KW-0138">CF(0)</keyword>
<keyword id="KW-0375">Hydrogen ion transport</keyword>
<keyword id="KW-0406">Ion transport</keyword>
<keyword id="KW-0472">Membrane</keyword>
<keyword id="KW-1185">Reference proteome</keyword>
<keyword id="KW-0812">Transmembrane</keyword>
<keyword id="KW-1133">Transmembrane helix</keyword>
<keyword id="KW-0813">Transport</keyword>
<evidence type="ECO:0000250" key="1"/>
<evidence type="ECO:0000255" key="2"/>
<evidence type="ECO:0000256" key="3">
    <source>
        <dbReference type="SAM" id="MobiDB-lite"/>
    </source>
</evidence>
<evidence type="ECO:0000305" key="4"/>
<sequence>MAESHGNAHGATAHTEADGGHKAPFPPFQKETFASQLVSLTIAFVALYLISSRLALPRVRQTIDDRENTIKGDLAQAQKLKDDSDAALKAYEAELAAARARAQAIGNETREKLNAAAEAERKALEERLSVKLADAEKTIASTRAAAMSNVRGIASDAATAIVQQLTGATPDSKLVDSAVDASMKG</sequence>
<accession>Q3SW37</accession>